<proteinExistence type="inferred from homology"/>
<comment type="function">
    <text evidence="1">Involved in lipopolysaccharide (LPS) biosynthesis. Translocates lipid A-core from the inner to the outer leaflet of the inner membrane. Transmembrane domains (TMD) form a pore in the inner membrane and the ATP-binding domain (NBD) is responsible for energy generation.</text>
</comment>
<comment type="catalytic activity">
    <reaction evidence="1">
        <text>ATP + H2O + lipid A-core oligosaccharideSide 1 = ADP + phosphate + lipid A-core oligosaccharideSide 2.</text>
        <dbReference type="EC" id="7.5.2.6"/>
    </reaction>
</comment>
<comment type="subunit">
    <text evidence="1">Homodimer.</text>
</comment>
<comment type="subcellular location">
    <subcellularLocation>
        <location evidence="1">Cell inner membrane</location>
        <topology evidence="1">Multi-pass membrane protein</topology>
    </subcellularLocation>
</comment>
<comment type="domain">
    <text evidence="1">In MsbA the ATP-binding domain (NBD) and the transmembrane domain (TMD) are fused.</text>
</comment>
<comment type="similarity">
    <text evidence="1">Belongs to the ABC transporter superfamily. Lipid exporter (TC 3.A.1.106) family.</text>
</comment>
<protein>
    <recommendedName>
        <fullName evidence="1">ATP-dependent lipid A-core flippase</fullName>
        <ecNumber evidence="1">7.5.2.6</ecNumber>
    </recommendedName>
    <alternativeName>
        <fullName evidence="1">Lipid A export ATP-binding/permease protein MsbA</fullName>
    </alternativeName>
</protein>
<feature type="chain" id="PRO_5000112753" description="ATP-dependent lipid A-core flippase">
    <location>
        <begin position="1"/>
        <end position="579"/>
    </location>
</feature>
<feature type="transmembrane region" description="Helical" evidence="1">
    <location>
        <begin position="24"/>
        <end position="44"/>
    </location>
</feature>
<feature type="transmembrane region" description="Helical" evidence="1">
    <location>
        <begin position="61"/>
        <end position="81"/>
    </location>
</feature>
<feature type="transmembrane region" description="Helical" evidence="1">
    <location>
        <begin position="147"/>
        <end position="167"/>
    </location>
</feature>
<feature type="transmembrane region" description="Helical" evidence="1">
    <location>
        <begin position="253"/>
        <end position="273"/>
    </location>
</feature>
<feature type="domain" description="ABC transmembrane type-1" evidence="1">
    <location>
        <begin position="25"/>
        <end position="306"/>
    </location>
</feature>
<feature type="domain" description="ABC transporter" evidence="1">
    <location>
        <begin position="338"/>
        <end position="573"/>
    </location>
</feature>
<feature type="binding site" evidence="1">
    <location>
        <begin position="372"/>
        <end position="379"/>
    </location>
    <ligand>
        <name>ATP</name>
        <dbReference type="ChEBI" id="CHEBI:30616"/>
    </ligand>
</feature>
<organism>
    <name type="scientific">Chromohalobacter salexigens (strain ATCC BAA-138 / DSM 3043 / CIP 106854 / NCIMB 13768 / 1H11)</name>
    <dbReference type="NCBI Taxonomy" id="290398"/>
    <lineage>
        <taxon>Bacteria</taxon>
        <taxon>Pseudomonadati</taxon>
        <taxon>Pseudomonadota</taxon>
        <taxon>Gammaproteobacteria</taxon>
        <taxon>Oceanospirillales</taxon>
        <taxon>Halomonadaceae</taxon>
        <taxon>Chromohalobacter</taxon>
    </lineage>
</organism>
<keyword id="KW-0067">ATP-binding</keyword>
<keyword id="KW-0997">Cell inner membrane</keyword>
<keyword id="KW-1003">Cell membrane</keyword>
<keyword id="KW-0445">Lipid transport</keyword>
<keyword id="KW-0472">Membrane</keyword>
<keyword id="KW-0547">Nucleotide-binding</keyword>
<keyword id="KW-1185">Reference proteome</keyword>
<keyword id="KW-1278">Translocase</keyword>
<keyword id="KW-0812">Transmembrane</keyword>
<keyword id="KW-1133">Transmembrane helix</keyword>
<keyword id="KW-0813">Transport</keyword>
<sequence>MRNATSWSLYRRLLSYVRPYWKAFLAAVVGYAIYAASSTALAEMMKRLIDGIQNPDAAFRLMLPLFVIGMFAARGVGTFLGTYYMSDVARNVVHALRCEVFNHMLRLPGRFFDMHSSGHLLSRVTYHVEQVTGAATNAITIILREGLFVIGLVSYLLWTNWMLTLIFMAVTPLIGLVVNYTSKRFRRLSRRIQNSMGDVTHVASEALSGYRVVRTHGAEAYEKARFAEASDYNREQSMKVALTKAVSTPVIQLLVALSLAGLVWLAMSPALMASMTPGEFVAFITAASLMAKPVRQLTEVNSTIQKGLSASQELFGLLEQPPEVDEGSYVPARIDGRVRFEGVRFRYGEDQAEVLKGIDLDVPQGEMIAIVGRSGSGKSTLVSLMPRFYRPTEGRVLLDDVDIQEYALSPLRQRIALVSQQVTLFNTTIAANIAYGHPDADREAVESAARSAYAHEFIERLPNGYDTVVGDNGVMLSGGQRQRLAIARAIFKDAPLLVLDEATSALDTESERYIQQALERVCRGRTTFVIAHRLSTIERADRILVMEQGEIIESGTHGELLAQDGAYAALHQLQFQEAE</sequence>
<name>MSBA_CHRSD</name>
<dbReference type="EC" id="7.5.2.6" evidence="1"/>
<dbReference type="EMBL" id="CP000285">
    <property type="protein sequence ID" value="ABE58939.1"/>
    <property type="molecule type" value="Genomic_DNA"/>
</dbReference>
<dbReference type="SMR" id="Q1QX69"/>
<dbReference type="STRING" id="290398.Csal_1586"/>
<dbReference type="KEGG" id="csa:Csal_1586"/>
<dbReference type="eggNOG" id="COG1132">
    <property type="taxonomic scope" value="Bacteria"/>
</dbReference>
<dbReference type="HOGENOM" id="CLU_000604_84_3_6"/>
<dbReference type="Proteomes" id="UP000000239">
    <property type="component" value="Chromosome"/>
</dbReference>
<dbReference type="GO" id="GO:0005886">
    <property type="term" value="C:plasma membrane"/>
    <property type="evidence" value="ECO:0007669"/>
    <property type="project" value="UniProtKB-SubCell"/>
</dbReference>
<dbReference type="GO" id="GO:0015421">
    <property type="term" value="F:ABC-type oligopeptide transporter activity"/>
    <property type="evidence" value="ECO:0007669"/>
    <property type="project" value="TreeGrafter"/>
</dbReference>
<dbReference type="GO" id="GO:0005524">
    <property type="term" value="F:ATP binding"/>
    <property type="evidence" value="ECO:0007669"/>
    <property type="project" value="UniProtKB-KW"/>
</dbReference>
<dbReference type="GO" id="GO:0016887">
    <property type="term" value="F:ATP hydrolysis activity"/>
    <property type="evidence" value="ECO:0007669"/>
    <property type="project" value="InterPro"/>
</dbReference>
<dbReference type="GO" id="GO:0034040">
    <property type="term" value="F:ATPase-coupled lipid transmembrane transporter activity"/>
    <property type="evidence" value="ECO:0007669"/>
    <property type="project" value="InterPro"/>
</dbReference>
<dbReference type="CDD" id="cd18552">
    <property type="entry name" value="ABC_6TM_MsbA_like"/>
    <property type="match status" value="1"/>
</dbReference>
<dbReference type="CDD" id="cd03251">
    <property type="entry name" value="ABCC_MsbA"/>
    <property type="match status" value="1"/>
</dbReference>
<dbReference type="FunFam" id="3.40.50.300:FF:000221">
    <property type="entry name" value="Multidrug ABC transporter ATP-binding protein"/>
    <property type="match status" value="1"/>
</dbReference>
<dbReference type="Gene3D" id="1.20.1560.10">
    <property type="entry name" value="ABC transporter type 1, transmembrane domain"/>
    <property type="match status" value="1"/>
</dbReference>
<dbReference type="Gene3D" id="3.40.50.300">
    <property type="entry name" value="P-loop containing nucleotide triphosphate hydrolases"/>
    <property type="match status" value="1"/>
</dbReference>
<dbReference type="InterPro" id="IPR003593">
    <property type="entry name" value="AAA+_ATPase"/>
</dbReference>
<dbReference type="InterPro" id="IPR011527">
    <property type="entry name" value="ABC1_TM_dom"/>
</dbReference>
<dbReference type="InterPro" id="IPR036640">
    <property type="entry name" value="ABC1_TM_sf"/>
</dbReference>
<dbReference type="InterPro" id="IPR003439">
    <property type="entry name" value="ABC_transporter-like_ATP-bd"/>
</dbReference>
<dbReference type="InterPro" id="IPR017871">
    <property type="entry name" value="ABC_transporter-like_CS"/>
</dbReference>
<dbReference type="InterPro" id="IPR011917">
    <property type="entry name" value="ABC_transpr_lipidA"/>
</dbReference>
<dbReference type="InterPro" id="IPR027417">
    <property type="entry name" value="P-loop_NTPase"/>
</dbReference>
<dbReference type="InterPro" id="IPR039421">
    <property type="entry name" value="Type_1_exporter"/>
</dbReference>
<dbReference type="NCBIfam" id="TIGR02203">
    <property type="entry name" value="MsbA_lipidA"/>
    <property type="match status" value="1"/>
</dbReference>
<dbReference type="PANTHER" id="PTHR43394:SF1">
    <property type="entry name" value="ATP-BINDING CASSETTE SUB-FAMILY B MEMBER 10, MITOCHONDRIAL"/>
    <property type="match status" value="1"/>
</dbReference>
<dbReference type="PANTHER" id="PTHR43394">
    <property type="entry name" value="ATP-DEPENDENT PERMEASE MDL1, MITOCHONDRIAL"/>
    <property type="match status" value="1"/>
</dbReference>
<dbReference type="Pfam" id="PF00664">
    <property type="entry name" value="ABC_membrane"/>
    <property type="match status" value="1"/>
</dbReference>
<dbReference type="Pfam" id="PF00005">
    <property type="entry name" value="ABC_tran"/>
    <property type="match status" value="1"/>
</dbReference>
<dbReference type="SMART" id="SM00382">
    <property type="entry name" value="AAA"/>
    <property type="match status" value="1"/>
</dbReference>
<dbReference type="SUPFAM" id="SSF90123">
    <property type="entry name" value="ABC transporter transmembrane region"/>
    <property type="match status" value="1"/>
</dbReference>
<dbReference type="SUPFAM" id="SSF52540">
    <property type="entry name" value="P-loop containing nucleoside triphosphate hydrolases"/>
    <property type="match status" value="1"/>
</dbReference>
<dbReference type="PROSITE" id="PS50929">
    <property type="entry name" value="ABC_TM1F"/>
    <property type="match status" value="1"/>
</dbReference>
<dbReference type="PROSITE" id="PS00211">
    <property type="entry name" value="ABC_TRANSPORTER_1"/>
    <property type="match status" value="1"/>
</dbReference>
<dbReference type="PROSITE" id="PS50893">
    <property type="entry name" value="ABC_TRANSPORTER_2"/>
    <property type="match status" value="1"/>
</dbReference>
<dbReference type="PROSITE" id="PS51239">
    <property type="entry name" value="MSBA"/>
    <property type="match status" value="1"/>
</dbReference>
<reference key="1">
    <citation type="journal article" date="2011" name="Stand. Genomic Sci.">
        <title>Complete genome sequence of the halophilic and highly halotolerant Chromohalobacter salexigens type strain (1H11(T)).</title>
        <authorList>
            <person name="Copeland A."/>
            <person name="O'Connor K."/>
            <person name="Lucas S."/>
            <person name="Lapidus A."/>
            <person name="Berry K.W."/>
            <person name="Detter J.C."/>
            <person name="Del Rio T.G."/>
            <person name="Hammon N."/>
            <person name="Dalin E."/>
            <person name="Tice H."/>
            <person name="Pitluck S."/>
            <person name="Bruce D."/>
            <person name="Goodwin L."/>
            <person name="Han C."/>
            <person name="Tapia R."/>
            <person name="Saunders E."/>
            <person name="Schmutz J."/>
            <person name="Brettin T."/>
            <person name="Larimer F."/>
            <person name="Land M."/>
            <person name="Hauser L."/>
            <person name="Vargas C."/>
            <person name="Nieto J.J."/>
            <person name="Kyrpides N.C."/>
            <person name="Ivanova N."/>
            <person name="Goker M."/>
            <person name="Klenk H.P."/>
            <person name="Csonka L.N."/>
            <person name="Woyke T."/>
        </authorList>
    </citation>
    <scope>NUCLEOTIDE SEQUENCE [LARGE SCALE GENOMIC DNA]</scope>
    <source>
        <strain>ATCC BAA-138 / DSM 3043 / CIP 106854 / NCIMB 13768 / 1H11</strain>
    </source>
</reference>
<evidence type="ECO:0000255" key="1">
    <source>
        <dbReference type="HAMAP-Rule" id="MF_01703"/>
    </source>
</evidence>
<gene>
    <name evidence="1" type="primary">msbA</name>
    <name type="ordered locus">Csal_1586</name>
</gene>
<accession>Q1QX69</accession>